<feature type="chain" id="PRO_0000182001" description="Probable lipid II flippase MurJ">
    <location>
        <begin position="1"/>
        <end position="514"/>
    </location>
</feature>
<feature type="transmembrane region" description="Helical" evidence="1">
    <location>
        <begin position="3"/>
        <end position="23"/>
    </location>
</feature>
<feature type="transmembrane region" description="Helical" evidence="1">
    <location>
        <begin position="25"/>
        <end position="45"/>
    </location>
</feature>
<feature type="transmembrane region" description="Helical" evidence="1">
    <location>
        <begin position="92"/>
        <end position="112"/>
    </location>
</feature>
<feature type="transmembrane region" description="Helical" evidence="1">
    <location>
        <begin position="130"/>
        <end position="150"/>
    </location>
</feature>
<feature type="transmembrane region" description="Helical" evidence="1">
    <location>
        <begin position="157"/>
        <end position="177"/>
    </location>
</feature>
<feature type="transmembrane region" description="Helical" evidence="1">
    <location>
        <begin position="186"/>
        <end position="206"/>
    </location>
</feature>
<feature type="transmembrane region" description="Helical" evidence="1">
    <location>
        <begin position="245"/>
        <end position="265"/>
    </location>
</feature>
<feature type="transmembrane region" description="Helical" evidence="1">
    <location>
        <begin position="271"/>
        <end position="291"/>
    </location>
</feature>
<feature type="transmembrane region" description="Helical" evidence="1">
    <location>
        <begin position="315"/>
        <end position="335"/>
    </location>
</feature>
<feature type="transmembrane region" description="Helical" evidence="1">
    <location>
        <begin position="354"/>
        <end position="374"/>
    </location>
</feature>
<feature type="transmembrane region" description="Helical" evidence="1">
    <location>
        <begin position="386"/>
        <end position="406"/>
    </location>
</feature>
<feature type="transmembrane region" description="Helical" evidence="1">
    <location>
        <begin position="409"/>
        <end position="429"/>
    </location>
</feature>
<feature type="transmembrane region" description="Helical" evidence="1">
    <location>
        <begin position="448"/>
        <end position="468"/>
    </location>
</feature>
<feature type="transmembrane region" description="Helical" evidence="1">
    <location>
        <begin position="481"/>
        <end position="501"/>
    </location>
</feature>
<evidence type="ECO:0000255" key="1">
    <source>
        <dbReference type="HAMAP-Rule" id="MF_02078"/>
    </source>
</evidence>
<proteinExistence type="inferred from homology"/>
<name>MURJ_BUCAP</name>
<gene>
    <name evidence="1" type="primary">murJ</name>
    <name type="synonym">mviN</name>
    <name type="ordered locus">BUsg_321</name>
</gene>
<accession>Q8K9L3</accession>
<reference key="1">
    <citation type="journal article" date="2002" name="Science">
        <title>50 million years of genomic stasis in endosymbiotic bacteria.</title>
        <authorList>
            <person name="Tamas I."/>
            <person name="Klasson L."/>
            <person name="Canbaeck B."/>
            <person name="Naeslund A.K."/>
            <person name="Eriksson A.-S."/>
            <person name="Wernegreen J.J."/>
            <person name="Sandstroem J.P."/>
            <person name="Moran N.A."/>
            <person name="Andersson S.G.E."/>
        </authorList>
    </citation>
    <scope>NUCLEOTIDE SEQUENCE [LARGE SCALE GENOMIC DNA]</scope>
    <source>
        <strain>Sg</strain>
    </source>
</reference>
<keyword id="KW-0997">Cell inner membrane</keyword>
<keyword id="KW-1003">Cell membrane</keyword>
<keyword id="KW-0133">Cell shape</keyword>
<keyword id="KW-0961">Cell wall biogenesis/degradation</keyword>
<keyword id="KW-0472">Membrane</keyword>
<keyword id="KW-0573">Peptidoglycan synthesis</keyword>
<keyword id="KW-0812">Transmembrane</keyword>
<keyword id="KW-1133">Transmembrane helix</keyword>
<keyword id="KW-0813">Transport</keyword>
<protein>
    <recommendedName>
        <fullName evidence="1">Probable lipid II flippase MurJ</fullName>
    </recommendedName>
</protein>
<dbReference type="EMBL" id="AE013218">
    <property type="protein sequence ID" value="AAM67875.1"/>
    <property type="molecule type" value="Genomic_DNA"/>
</dbReference>
<dbReference type="RefSeq" id="WP_011053842.1">
    <property type="nucleotide sequence ID" value="NC_004061.1"/>
</dbReference>
<dbReference type="SMR" id="Q8K9L3"/>
<dbReference type="STRING" id="198804.BUsg_321"/>
<dbReference type="GeneID" id="93003792"/>
<dbReference type="KEGG" id="bas:BUsg_321"/>
<dbReference type="eggNOG" id="COG0728">
    <property type="taxonomic scope" value="Bacteria"/>
</dbReference>
<dbReference type="HOGENOM" id="CLU_006797_5_3_6"/>
<dbReference type="UniPathway" id="UPA00219"/>
<dbReference type="Proteomes" id="UP000000416">
    <property type="component" value="Chromosome"/>
</dbReference>
<dbReference type="GO" id="GO:0005886">
    <property type="term" value="C:plasma membrane"/>
    <property type="evidence" value="ECO:0007669"/>
    <property type="project" value="UniProtKB-SubCell"/>
</dbReference>
<dbReference type="GO" id="GO:0015648">
    <property type="term" value="F:lipid-linked peptidoglycan transporter activity"/>
    <property type="evidence" value="ECO:0007669"/>
    <property type="project" value="UniProtKB-UniRule"/>
</dbReference>
<dbReference type="GO" id="GO:0071555">
    <property type="term" value="P:cell wall organization"/>
    <property type="evidence" value="ECO:0007669"/>
    <property type="project" value="UniProtKB-KW"/>
</dbReference>
<dbReference type="GO" id="GO:0034204">
    <property type="term" value="P:lipid translocation"/>
    <property type="evidence" value="ECO:0007669"/>
    <property type="project" value="TreeGrafter"/>
</dbReference>
<dbReference type="GO" id="GO:0009252">
    <property type="term" value="P:peptidoglycan biosynthetic process"/>
    <property type="evidence" value="ECO:0007669"/>
    <property type="project" value="UniProtKB-UniRule"/>
</dbReference>
<dbReference type="GO" id="GO:0008360">
    <property type="term" value="P:regulation of cell shape"/>
    <property type="evidence" value="ECO:0007669"/>
    <property type="project" value="UniProtKB-KW"/>
</dbReference>
<dbReference type="CDD" id="cd13123">
    <property type="entry name" value="MATE_MurJ_like"/>
    <property type="match status" value="1"/>
</dbReference>
<dbReference type="HAMAP" id="MF_02078">
    <property type="entry name" value="MurJ_MviN"/>
    <property type="match status" value="1"/>
</dbReference>
<dbReference type="InterPro" id="IPR051050">
    <property type="entry name" value="Lipid_II_flippase_MurJ/MviN"/>
</dbReference>
<dbReference type="InterPro" id="IPR004268">
    <property type="entry name" value="MurJ"/>
</dbReference>
<dbReference type="NCBIfam" id="TIGR01695">
    <property type="entry name" value="murJ_mviN"/>
    <property type="match status" value="1"/>
</dbReference>
<dbReference type="PANTHER" id="PTHR47019">
    <property type="entry name" value="LIPID II FLIPPASE MURJ"/>
    <property type="match status" value="1"/>
</dbReference>
<dbReference type="PANTHER" id="PTHR47019:SF1">
    <property type="entry name" value="LIPID II FLIPPASE MURJ"/>
    <property type="match status" value="1"/>
</dbReference>
<dbReference type="Pfam" id="PF03023">
    <property type="entry name" value="MurJ"/>
    <property type="match status" value="1"/>
</dbReference>
<dbReference type="PIRSF" id="PIRSF002869">
    <property type="entry name" value="MviN"/>
    <property type="match status" value="1"/>
</dbReference>
<dbReference type="PRINTS" id="PR01806">
    <property type="entry name" value="VIRFACTRMVIN"/>
</dbReference>
<organism>
    <name type="scientific">Buchnera aphidicola subsp. Schizaphis graminum (strain Sg)</name>
    <dbReference type="NCBI Taxonomy" id="198804"/>
    <lineage>
        <taxon>Bacteria</taxon>
        <taxon>Pseudomonadati</taxon>
        <taxon>Pseudomonadota</taxon>
        <taxon>Gammaproteobacteria</taxon>
        <taxon>Enterobacterales</taxon>
        <taxon>Erwiniaceae</taxon>
        <taxon>Buchnera</taxon>
    </lineage>
</organism>
<comment type="function">
    <text evidence="1">Involved in peptidoglycan biosynthesis. Transports lipid-linked peptidoglycan precursors from the inner to the outer leaflet of the cytoplasmic membrane.</text>
</comment>
<comment type="pathway">
    <text evidence="1">Cell wall biogenesis; peptidoglycan biosynthesis.</text>
</comment>
<comment type="subcellular location">
    <subcellularLocation>
        <location evidence="1">Cell inner membrane</location>
        <topology evidence="1">Multi-pass membrane protein</topology>
    </subcellularLocation>
</comment>
<comment type="similarity">
    <text evidence="1">Belongs to the MurJ/MviN family.</text>
</comment>
<sequence>MNILKSLISVGIMTLISRIFGFFRDVLIAHIFGASMFTDAFFIAFKIPNLLRRIFAEGAFYQSFIPILIDYKSRKDKEYIQEFIRSTCGFTILVLTTFVILGIIFSDYIIFISAPGFSESSKKLQLASNLLKIMFPYILFISLSSLCSSILNSYNYFFIPSLSSSLLNISIIVFSFFFSDYFEPSIISLAWSVMIGGFFQLFYQFPHLYKIKMLVFPKINFKNIGLIKVLKKMGPSTLGSCANQISLIFNTIFSSLLHSGSISWIYYADRLIEFPIGIIGVSLSTILFTSFSCSYSNNTQSEYKILLNWGIRFGLILSLPISVILFMFSKPLVIILFQYGKFTDFDVLMTQKALELYSFGLVSFILVKILVSAFYSCQEVNIPMRISILTLFLTQLMNPFLIFYFQHSGLALSCSIASWINFFLLYWKLYQKGIINFKLNDFIFIFRLLIAVLVMTFFLIFMLYFIPSWKIGSFFDKIIRLFTILSISGIVYLIALHFLGIRLLNYSDKLFQKK</sequence>